<keyword id="KW-0027">Amidation</keyword>
<keyword id="KW-0903">Direct protein sequencing</keyword>
<keyword id="KW-0527">Neuropeptide</keyword>
<keyword id="KW-0964">Secreted</keyword>
<organism>
    <name type="scientific">Derocalymma versicolor</name>
    <name type="common">Cockroach</name>
    <dbReference type="NCBI Taxonomy" id="344692"/>
    <lineage>
        <taxon>Eukaryota</taxon>
        <taxon>Metazoa</taxon>
        <taxon>Ecdysozoa</taxon>
        <taxon>Arthropoda</taxon>
        <taxon>Hexapoda</taxon>
        <taxon>Insecta</taxon>
        <taxon>Pterygota</taxon>
        <taxon>Neoptera</taxon>
        <taxon>Polyneoptera</taxon>
        <taxon>Dictyoptera</taxon>
        <taxon>Blattodea</taxon>
        <taxon>Blaberoidea</taxon>
        <taxon>Blaberidae</taxon>
        <taxon>Perisphaerinae</taxon>
        <taxon>Derocalymma</taxon>
    </lineage>
</organism>
<sequence>GSSGGLITFGRT</sequence>
<name>PVK1_DERVE</name>
<protein>
    <recommendedName>
        <fullName>Periviscerokinin-1</fullName>
        <shortName>DerVe-PVK-1</shortName>
    </recommendedName>
</protein>
<proteinExistence type="evidence at protein level"/>
<dbReference type="GO" id="GO:0005576">
    <property type="term" value="C:extracellular region"/>
    <property type="evidence" value="ECO:0007669"/>
    <property type="project" value="UniProtKB-SubCell"/>
</dbReference>
<dbReference type="GO" id="GO:0007218">
    <property type="term" value="P:neuropeptide signaling pathway"/>
    <property type="evidence" value="ECO:0007669"/>
    <property type="project" value="UniProtKB-KW"/>
</dbReference>
<dbReference type="InterPro" id="IPR013231">
    <property type="entry name" value="Periviscerokinin"/>
</dbReference>
<dbReference type="Pfam" id="PF08259">
    <property type="entry name" value="Periviscerokin"/>
    <property type="match status" value="1"/>
</dbReference>
<feature type="peptide" id="PRO_0000044244" description="Periviscerokinin-1">
    <location>
        <begin position="1"/>
        <end position="12"/>
    </location>
</feature>
<feature type="modified residue" description="Threonine amide" evidence="2 3">
    <location>
        <position position="12"/>
    </location>
</feature>
<accession>P84659</accession>
<evidence type="ECO:0000255" key="1"/>
<evidence type="ECO:0000269" key="2">
    <source>
    </source>
</evidence>
<evidence type="ECO:0000269" key="3">
    <source ref="2"/>
</evidence>
<evidence type="ECO:0000305" key="4"/>
<comment type="function">
    <text evidence="4">Mediates visceral muscle contractile activity (myotropic activity).</text>
</comment>
<comment type="subcellular location">
    <subcellularLocation>
        <location evidence="4">Secreted</location>
    </subcellularLocation>
</comment>
<comment type="tissue specificity">
    <text evidence="3">Expressed in abdominal perisympathetic organs and abdominal ganglia.</text>
</comment>
<comment type="mass spectrometry">
    <text>With amidation.</text>
</comment>
<comment type="similarity">
    <text evidence="1">Belongs to the periviscerokinin family.</text>
</comment>
<reference key="1">
    <citation type="journal article" date="2009" name="BMC Evol. Biol.">
        <title>A proteomic approach for studying insect phylogeny: CAPA peptides of ancient insect taxa (Dictyoptera, Blattoptera) as a test case.</title>
        <authorList>
            <person name="Roth S."/>
            <person name="Fromm B."/>
            <person name="Gaede G."/>
            <person name="Predel R."/>
        </authorList>
    </citation>
    <scope>PROTEIN SEQUENCE</scope>
    <scope>AMIDATION AT THR-12</scope>
    <source>
        <tissue>Abdominal perisympathetic organs</tissue>
    </source>
</reference>
<reference evidence="4" key="2">
    <citation type="submission" date="2005-09" db="UniProtKB">
        <authorList>
            <person name="Predel R."/>
        </authorList>
    </citation>
    <scope>PROTEIN SEQUENCE</scope>
    <scope>TISSUE SPECIFICITY</scope>
    <scope>MASS SPECTROMETRY</scope>
    <scope>AMIDATION AT THR-12</scope>
    <source>
        <tissue>Abdominal perisympathetic organs</tissue>
    </source>
</reference>